<protein>
    <recommendedName>
        <fullName evidence="1">Chromosome-partitioning ATPase Soj</fullName>
        <ecNumber evidence="1">3.6.4.-</ecNumber>
    </recommendedName>
</protein>
<accession>O83296</accession>
<evidence type="ECO:0000250" key="1">
    <source>
        <dbReference type="UniProtKB" id="Q72H90"/>
    </source>
</evidence>
<evidence type="ECO:0000303" key="2">
    <source>
    </source>
</evidence>
<evidence type="ECO:0000305" key="3"/>
<comment type="function">
    <text evidence="1">ATPase probably involved in chromosome partitioning. Cooperatively binds dsDNA, forming nucleoprotein filaments in a strictly ATP-dependent fashion (By similarity).</text>
</comment>
<comment type="catalytic activity">
    <reaction evidence="1">
        <text>ATP + H2O = ADP + phosphate + H(+)</text>
        <dbReference type="Rhea" id="RHEA:13065"/>
        <dbReference type="ChEBI" id="CHEBI:15377"/>
        <dbReference type="ChEBI" id="CHEBI:15378"/>
        <dbReference type="ChEBI" id="CHEBI:30616"/>
        <dbReference type="ChEBI" id="CHEBI:43474"/>
        <dbReference type="ChEBI" id="CHEBI:456216"/>
    </reaction>
</comment>
<comment type="similarity">
    <text evidence="3">Belongs to the ParA family.</text>
</comment>
<gene>
    <name evidence="2" type="primary">soj</name>
    <name type="ordered locus">TP_0272</name>
</gene>
<sequence length="253" mass="27342">MGKTLVFVNQKGGVGKTTSAINLGAYLALAGKKTLLVDFDPQGNMSSGLGLARGLTVYDLLAGKAHINSVLRTTPVHNLFAIPASIDLSGATVELVDEQDRELYLKKILAEVKDTYDFILIDCPPSLGILTLNGLAAANEVFIPLQCEYFALEGLTLLLQTVKRVQSGLNTALSIGGIFFTMYDTRTKLAQEVVKQVTTYFGDKVFNTIIPRNVKLSEAPSHGLPISSYDAQCAGARSYEKLAREIVARDGQR</sequence>
<feature type="chain" id="PRO_0000201982" description="Chromosome-partitioning ATPase Soj">
    <location>
        <begin position="1"/>
        <end position="253"/>
    </location>
</feature>
<feature type="binding site" evidence="1">
    <location>
        <position position="11"/>
    </location>
    <ligand>
        <name>ATP</name>
        <dbReference type="ChEBI" id="CHEBI:30616"/>
    </ligand>
</feature>
<feature type="binding site" evidence="1">
    <location>
        <position position="12"/>
    </location>
    <ligand>
        <name>ATP</name>
        <dbReference type="ChEBI" id="CHEBI:30616"/>
    </ligand>
</feature>
<feature type="binding site" evidence="1">
    <location>
        <position position="13"/>
    </location>
    <ligand>
        <name>ATP</name>
        <dbReference type="ChEBI" id="CHEBI:30616"/>
    </ligand>
</feature>
<feature type="binding site" evidence="1">
    <location>
        <position position="14"/>
    </location>
    <ligand>
        <name>ATP</name>
        <dbReference type="ChEBI" id="CHEBI:30616"/>
    </ligand>
</feature>
<feature type="binding site" evidence="1">
    <location>
        <position position="15"/>
    </location>
    <ligand>
        <name>ATP</name>
        <dbReference type="ChEBI" id="CHEBI:30616"/>
    </ligand>
</feature>
<feature type="binding site" evidence="1">
    <location>
        <position position="16"/>
    </location>
    <ligand>
        <name>ATP</name>
        <dbReference type="ChEBI" id="CHEBI:30616"/>
    </ligand>
</feature>
<feature type="binding site" evidence="1">
    <location>
        <position position="17"/>
    </location>
    <ligand>
        <name>ATP</name>
        <dbReference type="ChEBI" id="CHEBI:30616"/>
    </ligand>
</feature>
<feature type="binding site" evidence="1">
    <location>
        <position position="17"/>
    </location>
    <ligand>
        <name>Mg(2+)</name>
        <dbReference type="ChEBI" id="CHEBI:18420"/>
    </ligand>
</feature>
<feature type="binding site" evidence="1">
    <location>
        <position position="18"/>
    </location>
    <ligand>
        <name>ATP</name>
        <dbReference type="ChEBI" id="CHEBI:30616"/>
    </ligand>
</feature>
<feature type="binding site" evidence="1">
    <location>
        <position position="211"/>
    </location>
    <ligand>
        <name>ATP</name>
        <dbReference type="ChEBI" id="CHEBI:30616"/>
    </ligand>
</feature>
<feature type="binding site" evidence="1">
    <location>
        <position position="213"/>
    </location>
    <ligand>
        <name>ATP</name>
        <dbReference type="ChEBI" id="CHEBI:30616"/>
    </ligand>
</feature>
<name>SOJ_TREPA</name>
<dbReference type="EC" id="3.6.4.-" evidence="1"/>
<dbReference type="EMBL" id="AE000520">
    <property type="protein sequence ID" value="AAC65260.1"/>
    <property type="molecule type" value="Genomic_DNA"/>
</dbReference>
<dbReference type="PIR" id="B71346">
    <property type="entry name" value="B71346"/>
</dbReference>
<dbReference type="RefSeq" id="WP_010881721.1">
    <property type="nucleotide sequence ID" value="NC_021490.2"/>
</dbReference>
<dbReference type="SMR" id="O83296"/>
<dbReference type="IntAct" id="O83296">
    <property type="interactions" value="5"/>
</dbReference>
<dbReference type="STRING" id="243276.TP_0272"/>
<dbReference type="EnsemblBacteria" id="AAC65260">
    <property type="protein sequence ID" value="AAC65260"/>
    <property type="gene ID" value="TP_0272"/>
</dbReference>
<dbReference type="KEGG" id="tpa:TP_0272"/>
<dbReference type="KEGG" id="tpw:TPANIC_0272"/>
<dbReference type="eggNOG" id="COG1192">
    <property type="taxonomic scope" value="Bacteria"/>
</dbReference>
<dbReference type="HOGENOM" id="CLU_037612_1_4_12"/>
<dbReference type="OrthoDB" id="9815116at2"/>
<dbReference type="Proteomes" id="UP000000811">
    <property type="component" value="Chromosome"/>
</dbReference>
<dbReference type="GO" id="GO:0005524">
    <property type="term" value="F:ATP binding"/>
    <property type="evidence" value="ECO:0007669"/>
    <property type="project" value="UniProtKB-KW"/>
</dbReference>
<dbReference type="GO" id="GO:0016887">
    <property type="term" value="F:ATP hydrolysis activity"/>
    <property type="evidence" value="ECO:0007669"/>
    <property type="project" value="RHEA"/>
</dbReference>
<dbReference type="CDD" id="cd02042">
    <property type="entry name" value="ParAB_family"/>
    <property type="match status" value="1"/>
</dbReference>
<dbReference type="FunFam" id="3.40.50.300:FF:000285">
    <property type="entry name" value="Sporulation initiation inhibitor Soj"/>
    <property type="match status" value="1"/>
</dbReference>
<dbReference type="Gene3D" id="3.40.50.300">
    <property type="entry name" value="P-loop containing nucleotide triphosphate hydrolases"/>
    <property type="match status" value="1"/>
</dbReference>
<dbReference type="InterPro" id="IPR025669">
    <property type="entry name" value="AAA_dom"/>
</dbReference>
<dbReference type="InterPro" id="IPR050678">
    <property type="entry name" value="DNA_Partitioning_ATPase"/>
</dbReference>
<dbReference type="InterPro" id="IPR027417">
    <property type="entry name" value="P-loop_NTPase"/>
</dbReference>
<dbReference type="PANTHER" id="PTHR13696">
    <property type="entry name" value="P-LOOP CONTAINING NUCLEOSIDE TRIPHOSPHATE HYDROLASE"/>
    <property type="match status" value="1"/>
</dbReference>
<dbReference type="PANTHER" id="PTHR13696:SF52">
    <property type="entry name" value="PARA FAMILY PROTEIN CT_582"/>
    <property type="match status" value="1"/>
</dbReference>
<dbReference type="Pfam" id="PF13614">
    <property type="entry name" value="AAA_31"/>
    <property type="match status" value="1"/>
</dbReference>
<dbReference type="PIRSF" id="PIRSF009320">
    <property type="entry name" value="Nuc_binding_HP_1000"/>
    <property type="match status" value="1"/>
</dbReference>
<dbReference type="SUPFAM" id="SSF52540">
    <property type="entry name" value="P-loop containing nucleoside triphosphate hydrolases"/>
    <property type="match status" value="1"/>
</dbReference>
<proteinExistence type="inferred from homology"/>
<organism>
    <name type="scientific">Treponema pallidum (strain Nichols)</name>
    <dbReference type="NCBI Taxonomy" id="243276"/>
    <lineage>
        <taxon>Bacteria</taxon>
        <taxon>Pseudomonadati</taxon>
        <taxon>Spirochaetota</taxon>
        <taxon>Spirochaetia</taxon>
        <taxon>Spirochaetales</taxon>
        <taxon>Treponemataceae</taxon>
        <taxon>Treponema</taxon>
    </lineage>
</organism>
<keyword id="KW-0067">ATP-binding</keyword>
<keyword id="KW-0238">DNA-binding</keyword>
<keyword id="KW-0378">Hydrolase</keyword>
<keyword id="KW-0460">Magnesium</keyword>
<keyword id="KW-0479">Metal-binding</keyword>
<keyword id="KW-0547">Nucleotide-binding</keyword>
<keyword id="KW-1185">Reference proteome</keyword>
<reference key="1">
    <citation type="journal article" date="1998" name="Science">
        <title>Complete genome sequence of Treponema pallidum, the syphilis spirochete.</title>
        <authorList>
            <person name="Fraser C.M."/>
            <person name="Norris S.J."/>
            <person name="Weinstock G.M."/>
            <person name="White O."/>
            <person name="Sutton G.G."/>
            <person name="Dodson R.J."/>
            <person name="Gwinn M.L."/>
            <person name="Hickey E.K."/>
            <person name="Clayton R.A."/>
            <person name="Ketchum K.A."/>
            <person name="Sodergren E."/>
            <person name="Hardham J.M."/>
            <person name="McLeod M.P."/>
            <person name="Salzberg S.L."/>
            <person name="Peterson J.D."/>
            <person name="Khalak H.G."/>
            <person name="Richardson D.L."/>
            <person name="Howell J.K."/>
            <person name="Chidambaram M."/>
            <person name="Utterback T.R."/>
            <person name="McDonald L.A."/>
            <person name="Artiach P."/>
            <person name="Bowman C."/>
            <person name="Cotton M.D."/>
            <person name="Fujii C."/>
            <person name="Garland S.A."/>
            <person name="Hatch B."/>
            <person name="Horst K."/>
            <person name="Roberts K.M."/>
            <person name="Sandusky M."/>
            <person name="Weidman J.F."/>
            <person name="Smith H.O."/>
            <person name="Venter J.C."/>
        </authorList>
    </citation>
    <scope>NUCLEOTIDE SEQUENCE [LARGE SCALE GENOMIC DNA]</scope>
    <source>
        <strain>Nichols</strain>
    </source>
</reference>